<accession>Q9NRM7</accession>
<accession>B1AM47</accession>
<accession>Q9P2X1</accession>
<protein>
    <recommendedName>
        <fullName>Serine/threonine-protein kinase LATS2</fullName>
        <ecNumber evidence="8 24">2.7.11.1</ecNumber>
    </recommendedName>
    <alternativeName>
        <fullName>Kinase phosphorylated during mitosis protein</fullName>
    </alternativeName>
    <alternativeName>
        <fullName>Large tumor suppressor homolog 2</fullName>
    </alternativeName>
    <alternativeName>
        <fullName>Serine/threonine-protein kinase kpm</fullName>
    </alternativeName>
    <alternativeName>
        <fullName>Warts-like kinase</fullName>
    </alternativeName>
</protein>
<name>LATS2_HUMAN</name>
<comment type="function">
    <text evidence="8 9 10 15 18 20 21 23 24">Negative regulator of YAP1 in the Hippo signaling pathway that plays a pivotal role in organ size control and tumor suppression by restricting proliferation and promoting apoptosis (PubMed:18158288, PubMed:26437443, PubMed:26598551, PubMed:34404733). The core of this pathway is composed of a kinase cascade wherein STK3/MST2 and STK4/MST1, in complex with its regulatory protein SAV1, phosphorylates and activates LATS1/2 in complex with its regulatory protein MOB1, which in turn phosphorylates and inactivates YAP1 oncoprotein and WWTR1/TAZ (PubMed:26437443, PubMed:26598551, PubMed:34404733). Phosphorylation of YAP1 by LATS2 inhibits its translocation into the nucleus to regulate cellular genes important for cell proliferation, cell death, and cell migration (PubMed:26598551, PubMed:34404733). Also phosphorylates YAP1 in response to cell contact inhibition-driven WWP1 ubiquitination of AMOTL2, which results in LATS2 activation (PubMed:34404733). Acts as a tumor suppressor which plays a critical role in centrosome duplication, maintenance of mitotic fidelity and genomic stability (PubMed:10871863). Negatively regulates G1/S transition by down-regulating cyclin E/CDK2 kinase activity (PubMed:12853976). Negative regulator of the androgen receptor (PubMed:15131260). Phosphorylates SNAI1 in the nucleus leading to its nuclear retention and stabilization, which enhances its epithelial-mesenchymal transition and tumor cell invasion/migration activities (PubMed:21952048). This tumor-promoting activity is independent of its effects upon YAP1 or WWTR1/TAZ (PubMed:21952048). Acts as an activator of the NLRP3 inflammasome by mediating phosphorylation of 'Ser-265' of NLRP3 following NLRP3 palmitoylation, promoting NLRP3 activation by NEK7 (PubMed:39173637).</text>
</comment>
<comment type="catalytic activity">
    <reaction evidence="8 24">
        <text>L-seryl-[protein] + ATP = O-phospho-L-seryl-[protein] + ADP + H(+)</text>
        <dbReference type="Rhea" id="RHEA:17989"/>
        <dbReference type="Rhea" id="RHEA-COMP:9863"/>
        <dbReference type="Rhea" id="RHEA-COMP:11604"/>
        <dbReference type="ChEBI" id="CHEBI:15378"/>
        <dbReference type="ChEBI" id="CHEBI:29999"/>
        <dbReference type="ChEBI" id="CHEBI:30616"/>
        <dbReference type="ChEBI" id="CHEBI:83421"/>
        <dbReference type="ChEBI" id="CHEBI:456216"/>
        <dbReference type="EC" id="2.7.11.1"/>
    </reaction>
</comment>
<comment type="catalytic activity">
    <reaction evidence="8">
        <text>L-threonyl-[protein] + ATP = O-phospho-L-threonyl-[protein] + ADP + H(+)</text>
        <dbReference type="Rhea" id="RHEA:46608"/>
        <dbReference type="Rhea" id="RHEA-COMP:11060"/>
        <dbReference type="Rhea" id="RHEA-COMP:11605"/>
        <dbReference type="ChEBI" id="CHEBI:15378"/>
        <dbReference type="ChEBI" id="CHEBI:30013"/>
        <dbReference type="ChEBI" id="CHEBI:30616"/>
        <dbReference type="ChEBI" id="CHEBI:61977"/>
        <dbReference type="ChEBI" id="CHEBI:456216"/>
        <dbReference type="EC" id="2.7.11.1"/>
    </reaction>
</comment>
<comment type="cofactor">
    <cofactor>
        <name>Mg(2+)</name>
        <dbReference type="ChEBI" id="CHEBI:18420"/>
    </cofactor>
</comment>
<comment type="subunit">
    <text evidence="10 11 13 15 16 17 18 19 21">Interacts with and is phosphorylated by AURKA. Binds to AR. Interacts with AJUBA during mitosis and this complex regulates organization of the spindle apparatus through recruitment of gamma-tubulin to the centrosome. Interacts (via PPxY motif) with YAP1 (via WW domains). Interacts with MOB1A and MOB1B. Interacts with LIMD1, WTIP and AJUBA. Interacts with SNAI1. Interacts with WWC1, WWC2 and WWC3 (via their WW domains) (PubMed:24682284). Interacts (via UBA domain) with ubiquitinated AMOTL2; the interaction promotes LATS2 phosphorylation of YAP1 (PubMed:26598551).</text>
</comment>
<comment type="interaction">
    <interactant intactId="EBI-3506895">
        <id>Q9NRM7</id>
    </interactant>
    <interactant intactId="EBI-949782">
        <id>Q96IF1</id>
        <label>AJUBA</label>
    </interactant>
    <organismsDiffer>false</organismsDiffer>
    <experiments>7</experiments>
</comment>
<comment type="interaction">
    <interactant intactId="EBI-3506895">
        <id>Q9NRM7</id>
    </interactant>
    <interactant intactId="EBI-1996353">
        <id>Q9Y4B6</id>
        <label>DCAF1</label>
    </interactant>
    <organismsDiffer>false</organismsDiffer>
    <experiments>2</experiments>
</comment>
<comment type="interaction">
    <interactant intactId="EBI-3506895">
        <id>Q9NRM7</id>
    </interactant>
    <interactant intactId="EBI-741101">
        <id>Q13643</id>
        <label>FHL3</label>
    </interactant>
    <organismsDiffer>false</organismsDiffer>
    <experiments>4</experiments>
</comment>
<comment type="interaction">
    <interactant intactId="EBI-3506895">
        <id>Q9NRM7</id>
    </interactant>
    <interactant intactId="EBI-748229">
        <id>Q9H8S9</id>
        <label>MOB1A</label>
    </interactant>
    <organismsDiffer>false</organismsDiffer>
    <experiments>5</experiments>
</comment>
<comment type="interaction">
    <interactant intactId="EBI-3506895">
        <id>Q9NRM7</id>
    </interactant>
    <interactant intactId="EBI-2558745">
        <id>Q7L9L4</id>
        <label>MOB1B</label>
    </interactant>
    <organismsDiffer>false</organismsDiffer>
    <experiments>7</experiments>
</comment>
<comment type="interaction">
    <interactant intactId="EBI-3506895">
        <id>Q9NRM7</id>
    </interactant>
    <interactant intactId="EBI-948141">
        <id>O43255</id>
        <label>SIAH2</label>
    </interactant>
    <organismsDiffer>false</organismsDiffer>
    <experiments>6</experiments>
</comment>
<comment type="subcellular location">
    <subcellularLocation>
        <location>Cytoplasm</location>
        <location>Cytoskeleton</location>
        <location>Microtubule organizing center</location>
        <location>Centrosome</location>
    </subcellularLocation>
    <subcellularLocation>
        <location>Cytoplasm</location>
    </subcellularLocation>
    <subcellularLocation>
        <location>Cytoplasm</location>
        <location>Cytoskeleton</location>
        <location>Spindle pole</location>
    </subcellularLocation>
    <subcellularLocation>
        <location>Nucleus</location>
    </subcellularLocation>
    <text>Colocalizes with AURKA at the centrosomes during interphase, early prophase and cytokinesis. Migrates to the spindle poles during mitosis, and to the midbody during cytokinesis. Translocates to the nucleus upon mitotic stress by nocodazole treatment.</text>
</comment>
<comment type="tissue specificity">
    <text evidence="7 8">Expressed at high levels in heart and skeletal muscle and at lower levels in all other tissues examined.</text>
</comment>
<comment type="PTM">
    <text evidence="11 12 18 20 22">Autophosphorylated and phosphorylated during M-phase and the G1/S-phase of the cell cycle (PubMed:15147269, PubMed:21952048). Phosphorylated and activated by STK3/MST2 (PubMed:15688006). Phosphorylated by MAP4Ks; in parallel to STK3/MST2 and resulting to its activation (PubMed:26437443). Phosphorylation by NUAK2 may regulate its activity in phosphorylation and inactivation YAP1 (PubMed:32845958).</text>
</comment>
<comment type="similarity">
    <text evidence="25">Belongs to the protein kinase superfamily. AGC Ser/Thr protein kinase family.</text>
</comment>
<comment type="sequence caution" evidence="25">
    <conflict type="frameshift">
        <sequence resource="EMBL-CDS" id="BAA92381"/>
    </conflict>
</comment>
<comment type="online information" name="Atlas of Genetics and Cytogenetics in Oncology and Haematology">
    <link uri="https://atlasgeneticsoncology.org/gene/41128/LATS2"/>
</comment>
<dbReference type="EC" id="2.7.11.1" evidence="8 24"/>
<dbReference type="EMBL" id="AF207547">
    <property type="protein sequence ID" value="AAF80561.1"/>
    <property type="molecule type" value="mRNA"/>
</dbReference>
<dbReference type="EMBL" id="AK314235">
    <property type="protein sequence ID" value="BAG36905.1"/>
    <property type="molecule type" value="mRNA"/>
</dbReference>
<dbReference type="EMBL" id="AL161613">
    <property type="status" value="NOT_ANNOTATED_CDS"/>
    <property type="molecule type" value="Genomic_DNA"/>
</dbReference>
<dbReference type="EMBL" id="AL356285">
    <property type="status" value="NOT_ANNOTATED_CDS"/>
    <property type="molecule type" value="Genomic_DNA"/>
</dbReference>
<dbReference type="EMBL" id="CH471075">
    <property type="protein sequence ID" value="EAX08286.1"/>
    <property type="molecule type" value="Genomic_DNA"/>
</dbReference>
<dbReference type="EMBL" id="AB028019">
    <property type="protein sequence ID" value="BAA92381.1"/>
    <property type="status" value="ALT_FRAME"/>
    <property type="molecule type" value="mRNA"/>
</dbReference>
<dbReference type="CCDS" id="CCDS9294.1"/>
<dbReference type="RefSeq" id="NP_055387.2">
    <property type="nucleotide sequence ID" value="NM_014572.3"/>
</dbReference>
<dbReference type="RefSeq" id="XP_005266399.1">
    <property type="nucleotide sequence ID" value="XM_005266342.1"/>
</dbReference>
<dbReference type="RefSeq" id="XP_047286222.1">
    <property type="nucleotide sequence ID" value="XM_047430266.1"/>
</dbReference>
<dbReference type="PDB" id="4ZRI">
    <property type="method" value="X-ray"/>
    <property type="resolution" value="2.70 A"/>
    <property type="chains" value="C/D=68-99"/>
</dbReference>
<dbReference type="PDBsum" id="4ZRI"/>
<dbReference type="SMR" id="Q9NRM7"/>
<dbReference type="BioGRID" id="117727">
    <property type="interactions" value="297"/>
</dbReference>
<dbReference type="CORUM" id="Q9NRM7"/>
<dbReference type="DIP" id="DIP-43883N"/>
<dbReference type="ELM" id="Q9NRM7"/>
<dbReference type="FunCoup" id="Q9NRM7">
    <property type="interactions" value="1955"/>
</dbReference>
<dbReference type="IntAct" id="Q9NRM7">
    <property type="interactions" value="84"/>
</dbReference>
<dbReference type="MINT" id="Q9NRM7"/>
<dbReference type="STRING" id="9606.ENSP00000372035"/>
<dbReference type="BindingDB" id="Q9NRM7"/>
<dbReference type="ChEMBL" id="CHEMBL5907"/>
<dbReference type="DrugCentral" id="Q9NRM7"/>
<dbReference type="GuidetoPHARMACOLOGY" id="1516"/>
<dbReference type="GlyCosmos" id="Q9NRM7">
    <property type="glycosylation" value="1 site, 1 glycan"/>
</dbReference>
<dbReference type="GlyGen" id="Q9NRM7">
    <property type="glycosylation" value="9 sites, 1 O-linked glycan (8 sites)"/>
</dbReference>
<dbReference type="iPTMnet" id="Q9NRM7"/>
<dbReference type="PhosphoSitePlus" id="Q9NRM7"/>
<dbReference type="BioMuta" id="LATS2"/>
<dbReference type="DMDM" id="212276441"/>
<dbReference type="jPOST" id="Q9NRM7"/>
<dbReference type="MassIVE" id="Q9NRM7"/>
<dbReference type="PaxDb" id="9606-ENSP00000372035"/>
<dbReference type="PeptideAtlas" id="Q9NRM7"/>
<dbReference type="ProteomicsDB" id="82392"/>
<dbReference type="Pumba" id="Q9NRM7"/>
<dbReference type="Antibodypedia" id="22361">
    <property type="antibodies" value="321 antibodies from 31 providers"/>
</dbReference>
<dbReference type="DNASU" id="26524"/>
<dbReference type="Ensembl" id="ENST00000382592.5">
    <property type="protein sequence ID" value="ENSP00000372035.4"/>
    <property type="gene ID" value="ENSG00000150457.9"/>
</dbReference>
<dbReference type="GeneID" id="26524"/>
<dbReference type="KEGG" id="hsa:26524"/>
<dbReference type="MANE-Select" id="ENST00000382592.5">
    <property type="protein sequence ID" value="ENSP00000372035.4"/>
    <property type="RefSeq nucleotide sequence ID" value="NM_014572.3"/>
    <property type="RefSeq protein sequence ID" value="NP_055387.2"/>
</dbReference>
<dbReference type="UCSC" id="uc001unr.6">
    <property type="organism name" value="human"/>
</dbReference>
<dbReference type="AGR" id="HGNC:6515"/>
<dbReference type="CTD" id="26524"/>
<dbReference type="DisGeNET" id="26524"/>
<dbReference type="GeneCards" id="LATS2"/>
<dbReference type="HGNC" id="HGNC:6515">
    <property type="gene designation" value="LATS2"/>
</dbReference>
<dbReference type="HPA" id="ENSG00000150457">
    <property type="expression patterns" value="Low tissue specificity"/>
</dbReference>
<dbReference type="MalaCards" id="LATS2"/>
<dbReference type="MIM" id="604861">
    <property type="type" value="gene"/>
</dbReference>
<dbReference type="neXtProt" id="NX_Q9NRM7"/>
<dbReference type="OpenTargets" id="ENSG00000150457"/>
<dbReference type="PharmGKB" id="PA30302"/>
<dbReference type="VEuPathDB" id="HostDB:ENSG00000150457"/>
<dbReference type="eggNOG" id="KOG0608">
    <property type="taxonomic scope" value="Eukaryota"/>
</dbReference>
<dbReference type="GeneTree" id="ENSGT00940000159161"/>
<dbReference type="HOGENOM" id="CLU_004885_1_0_1"/>
<dbReference type="InParanoid" id="Q9NRM7"/>
<dbReference type="OMA" id="FNNHQQP"/>
<dbReference type="OrthoDB" id="3638488at2759"/>
<dbReference type="PAN-GO" id="Q9NRM7">
    <property type="GO annotations" value="8 GO annotations based on evolutionary models"/>
</dbReference>
<dbReference type="PhylomeDB" id="Q9NRM7"/>
<dbReference type="TreeFam" id="TF351549"/>
<dbReference type="PathwayCommons" id="Q9NRM7"/>
<dbReference type="Reactome" id="R-HSA-2028269">
    <property type="pathway name" value="Signaling by Hippo"/>
</dbReference>
<dbReference type="SignaLink" id="Q9NRM7"/>
<dbReference type="SIGNOR" id="Q9NRM7"/>
<dbReference type="BioGRID-ORCS" id="26524">
    <property type="hits" value="32 hits in 1200 CRISPR screens"/>
</dbReference>
<dbReference type="CD-CODE" id="8C2F96ED">
    <property type="entry name" value="Centrosome"/>
</dbReference>
<dbReference type="ChiTaRS" id="LATS2">
    <property type="organism name" value="human"/>
</dbReference>
<dbReference type="GeneWiki" id="LATS2"/>
<dbReference type="GenomeRNAi" id="26524"/>
<dbReference type="Pharos" id="Q9NRM7">
    <property type="development level" value="Tchem"/>
</dbReference>
<dbReference type="PRO" id="PR:Q9NRM7"/>
<dbReference type="Proteomes" id="UP000005640">
    <property type="component" value="Chromosome 13"/>
</dbReference>
<dbReference type="RNAct" id="Q9NRM7">
    <property type="molecule type" value="protein"/>
</dbReference>
<dbReference type="Bgee" id="ENSG00000150457">
    <property type="expression patterns" value="Expressed in epithelial cell of pancreas and 196 other cell types or tissues"/>
</dbReference>
<dbReference type="ExpressionAtlas" id="Q9NRM7">
    <property type="expression patterns" value="baseline and differential"/>
</dbReference>
<dbReference type="GO" id="GO:0034451">
    <property type="term" value="C:centriolar satellite"/>
    <property type="evidence" value="ECO:0000314"/>
    <property type="project" value="HPA"/>
</dbReference>
<dbReference type="GO" id="GO:0005737">
    <property type="term" value="C:cytoplasm"/>
    <property type="evidence" value="ECO:0000314"/>
    <property type="project" value="UniProt"/>
</dbReference>
<dbReference type="GO" id="GO:0005829">
    <property type="term" value="C:cytosol"/>
    <property type="evidence" value="ECO:0000314"/>
    <property type="project" value="FlyBase"/>
</dbReference>
<dbReference type="GO" id="GO:0005634">
    <property type="term" value="C:nucleus"/>
    <property type="evidence" value="ECO:0000314"/>
    <property type="project" value="MGI"/>
</dbReference>
<dbReference type="GO" id="GO:0000922">
    <property type="term" value="C:spindle pole"/>
    <property type="evidence" value="ECO:0000314"/>
    <property type="project" value="UniProtKB"/>
</dbReference>
<dbReference type="GO" id="GO:0005524">
    <property type="term" value="F:ATP binding"/>
    <property type="evidence" value="ECO:0000314"/>
    <property type="project" value="UniProtKB"/>
</dbReference>
<dbReference type="GO" id="GO:0046872">
    <property type="term" value="F:metal ion binding"/>
    <property type="evidence" value="ECO:0007669"/>
    <property type="project" value="UniProtKB-KW"/>
</dbReference>
<dbReference type="GO" id="GO:0106310">
    <property type="term" value="F:protein serine kinase activity"/>
    <property type="evidence" value="ECO:0007669"/>
    <property type="project" value="RHEA"/>
</dbReference>
<dbReference type="GO" id="GO:0004674">
    <property type="term" value="F:protein serine/threonine kinase activity"/>
    <property type="evidence" value="ECO:0000314"/>
    <property type="project" value="UniProtKB"/>
</dbReference>
<dbReference type="GO" id="GO:0060070">
    <property type="term" value="P:canonical Wnt signaling pathway"/>
    <property type="evidence" value="ECO:0007669"/>
    <property type="project" value="Ensembl"/>
</dbReference>
<dbReference type="GO" id="GO:0051301">
    <property type="term" value="P:cell division"/>
    <property type="evidence" value="ECO:0007669"/>
    <property type="project" value="UniProtKB-KW"/>
</dbReference>
<dbReference type="GO" id="GO:0000082">
    <property type="term" value="P:G1/S transition of mitotic cell cycle"/>
    <property type="evidence" value="ECO:0000314"/>
    <property type="project" value="UniProtKB"/>
</dbReference>
<dbReference type="GO" id="GO:0035329">
    <property type="term" value="P:hippo signaling"/>
    <property type="evidence" value="ECO:0000314"/>
    <property type="project" value="BHF-UCL"/>
</dbReference>
<dbReference type="GO" id="GO:0009755">
    <property type="term" value="P:hormone-mediated signaling pathway"/>
    <property type="evidence" value="ECO:0000314"/>
    <property type="project" value="UniProtKB"/>
</dbReference>
<dbReference type="GO" id="GO:0001827">
    <property type="term" value="P:inner cell mass cell fate commitment"/>
    <property type="evidence" value="ECO:0007669"/>
    <property type="project" value="Ensembl"/>
</dbReference>
<dbReference type="GO" id="GO:0001828">
    <property type="term" value="P:inner cell mass cellular morphogenesis"/>
    <property type="evidence" value="ECO:0007669"/>
    <property type="project" value="Ensembl"/>
</dbReference>
<dbReference type="GO" id="GO:0035556">
    <property type="term" value="P:intracellular signal transduction"/>
    <property type="evidence" value="ECO:0000314"/>
    <property type="project" value="UniProtKB"/>
</dbReference>
<dbReference type="GO" id="GO:0030216">
    <property type="term" value="P:keratinocyte differentiation"/>
    <property type="evidence" value="ECO:0007669"/>
    <property type="project" value="Ensembl"/>
</dbReference>
<dbReference type="GO" id="GO:0090090">
    <property type="term" value="P:negative regulation of canonical Wnt signaling pathway"/>
    <property type="evidence" value="ECO:0000315"/>
    <property type="project" value="BHF-UCL"/>
</dbReference>
<dbReference type="GO" id="GO:0045736">
    <property type="term" value="P:negative regulation of cyclin-dependent protein serine/threonine kinase activity"/>
    <property type="evidence" value="ECO:0000314"/>
    <property type="project" value="UniProtKB"/>
</dbReference>
<dbReference type="GO" id="GO:1900181">
    <property type="term" value="P:negative regulation of protein localization to nucleus"/>
    <property type="evidence" value="ECO:0000250"/>
    <property type="project" value="UniProtKB"/>
</dbReference>
<dbReference type="GO" id="GO:0043065">
    <property type="term" value="P:positive regulation of apoptotic process"/>
    <property type="evidence" value="ECO:0000318"/>
    <property type="project" value="GO_Central"/>
</dbReference>
<dbReference type="GO" id="GO:1900227">
    <property type="term" value="P:positive regulation of NLRP3 inflammasome complex assembly"/>
    <property type="evidence" value="ECO:0000314"/>
    <property type="project" value="UniProtKB"/>
</dbReference>
<dbReference type="GO" id="GO:0008104">
    <property type="term" value="P:protein localization"/>
    <property type="evidence" value="ECO:0007669"/>
    <property type="project" value="Ensembl"/>
</dbReference>
<dbReference type="GO" id="GO:0006468">
    <property type="term" value="P:protein phosphorylation"/>
    <property type="evidence" value="ECO:0000314"/>
    <property type="project" value="UniProtKB"/>
</dbReference>
<dbReference type="GO" id="GO:0046620">
    <property type="term" value="P:regulation of organ growth"/>
    <property type="evidence" value="ECO:0000318"/>
    <property type="project" value="GO_Central"/>
</dbReference>
<dbReference type="GO" id="GO:0017015">
    <property type="term" value="P:regulation of transforming growth factor beta receptor signaling pathway"/>
    <property type="evidence" value="ECO:0000250"/>
    <property type="project" value="UniProtKB"/>
</dbReference>
<dbReference type="CDD" id="cd21777">
    <property type="entry name" value="MobB_LATS2"/>
    <property type="match status" value="1"/>
</dbReference>
<dbReference type="CDD" id="cd05626">
    <property type="entry name" value="STKc_LATS2"/>
    <property type="match status" value="1"/>
</dbReference>
<dbReference type="CDD" id="cd14398">
    <property type="entry name" value="UBA_LATS2"/>
    <property type="match status" value="1"/>
</dbReference>
<dbReference type="FunFam" id="3.30.200.20:FF:001246">
    <property type="entry name" value="Large tumor suppressor kinase 1"/>
    <property type="match status" value="1"/>
</dbReference>
<dbReference type="FunFam" id="1.10.510.10:FF:000086">
    <property type="entry name" value="Non-specific serine/threonine protein kinase"/>
    <property type="match status" value="1"/>
</dbReference>
<dbReference type="FunFam" id="1.10.510.10:FF:000199">
    <property type="entry name" value="Non-specific serine/threonine protein kinase"/>
    <property type="match status" value="1"/>
</dbReference>
<dbReference type="FunFam" id="1.10.8.10:FF:000029">
    <property type="entry name" value="Serine/threonine-protein kinase LATS1 isoform 1"/>
    <property type="match status" value="1"/>
</dbReference>
<dbReference type="Gene3D" id="1.10.8.10">
    <property type="entry name" value="DNA helicase RuvA subunit, C-terminal domain"/>
    <property type="match status" value="1"/>
</dbReference>
<dbReference type="Gene3D" id="3.30.200.20">
    <property type="entry name" value="Phosphorylase Kinase, domain 1"/>
    <property type="match status" value="1"/>
</dbReference>
<dbReference type="Gene3D" id="1.10.510.10">
    <property type="entry name" value="Transferase(Phosphotransferase) domain 1"/>
    <property type="match status" value="2"/>
</dbReference>
<dbReference type="InterPro" id="IPR000961">
    <property type="entry name" value="AGC-kinase_C"/>
</dbReference>
<dbReference type="InterPro" id="IPR011009">
    <property type="entry name" value="Kinase-like_dom_sf"/>
</dbReference>
<dbReference type="InterPro" id="IPR017892">
    <property type="entry name" value="Pkinase_C"/>
</dbReference>
<dbReference type="InterPro" id="IPR000719">
    <property type="entry name" value="Prot_kinase_dom"/>
</dbReference>
<dbReference type="InterPro" id="IPR017441">
    <property type="entry name" value="Protein_kinase_ATP_BS"/>
</dbReference>
<dbReference type="InterPro" id="IPR008271">
    <property type="entry name" value="Ser/Thr_kinase_AS"/>
</dbReference>
<dbReference type="InterPro" id="IPR050236">
    <property type="entry name" value="Ser_Thr_kinase_AGC"/>
</dbReference>
<dbReference type="InterPro" id="IPR015940">
    <property type="entry name" value="UBA"/>
</dbReference>
<dbReference type="InterPro" id="IPR009060">
    <property type="entry name" value="UBA-like_sf"/>
</dbReference>
<dbReference type="PANTHER" id="PTHR24356">
    <property type="entry name" value="SERINE/THREONINE-PROTEIN KINASE"/>
    <property type="match status" value="1"/>
</dbReference>
<dbReference type="PANTHER" id="PTHR24356:SF149">
    <property type="entry name" value="SERINE_THREONINE-PROTEIN KINASE LATS2"/>
    <property type="match status" value="1"/>
</dbReference>
<dbReference type="Pfam" id="PF00069">
    <property type="entry name" value="Pkinase"/>
    <property type="match status" value="2"/>
</dbReference>
<dbReference type="Pfam" id="PF00433">
    <property type="entry name" value="Pkinase_C"/>
    <property type="match status" value="1"/>
</dbReference>
<dbReference type="SMART" id="SM00133">
    <property type="entry name" value="S_TK_X"/>
    <property type="match status" value="1"/>
</dbReference>
<dbReference type="SMART" id="SM00220">
    <property type="entry name" value="S_TKc"/>
    <property type="match status" value="1"/>
</dbReference>
<dbReference type="SUPFAM" id="SSF56112">
    <property type="entry name" value="Protein kinase-like (PK-like)"/>
    <property type="match status" value="1"/>
</dbReference>
<dbReference type="SUPFAM" id="SSF46934">
    <property type="entry name" value="UBA-like"/>
    <property type="match status" value="1"/>
</dbReference>
<dbReference type="PROSITE" id="PS51285">
    <property type="entry name" value="AGC_KINASE_CTER"/>
    <property type="match status" value="1"/>
</dbReference>
<dbReference type="PROSITE" id="PS00107">
    <property type="entry name" value="PROTEIN_KINASE_ATP"/>
    <property type="match status" value="1"/>
</dbReference>
<dbReference type="PROSITE" id="PS50011">
    <property type="entry name" value="PROTEIN_KINASE_DOM"/>
    <property type="match status" value="1"/>
</dbReference>
<dbReference type="PROSITE" id="PS00108">
    <property type="entry name" value="PROTEIN_KINASE_ST"/>
    <property type="match status" value="1"/>
</dbReference>
<dbReference type="PROSITE" id="PS50030">
    <property type="entry name" value="UBA"/>
    <property type="match status" value="1"/>
</dbReference>
<feature type="chain" id="PRO_0000086234" description="Serine/threonine-protein kinase LATS2">
    <location>
        <begin position="1"/>
        <end position="1088"/>
    </location>
</feature>
<feature type="domain" description="UBA" evidence="3">
    <location>
        <begin position="98"/>
        <end position="139"/>
    </location>
</feature>
<feature type="domain" description="Protein kinase" evidence="2">
    <location>
        <begin position="668"/>
        <end position="973"/>
    </location>
</feature>
<feature type="domain" description="AGC-kinase C-terminal" evidence="4">
    <location>
        <begin position="974"/>
        <end position="1052"/>
    </location>
</feature>
<feature type="region of interest" description="Disordered" evidence="6">
    <location>
        <begin position="24"/>
        <end position="49"/>
    </location>
</feature>
<feature type="region of interest" description="Interaction with ubiquitinated AMOTL2" evidence="21">
    <location>
        <begin position="101"/>
        <end position="141"/>
    </location>
</feature>
<feature type="region of interest" description="Disordered" evidence="6">
    <location>
        <begin position="271"/>
        <end position="323"/>
    </location>
</feature>
<feature type="region of interest" description="Disordered" evidence="6">
    <location>
        <begin position="383"/>
        <end position="428"/>
    </location>
</feature>
<feature type="region of interest" description="Disordered" evidence="6">
    <location>
        <begin position="454"/>
        <end position="483"/>
    </location>
</feature>
<feature type="region of interest" description="Disordered" evidence="6">
    <location>
        <begin position="543"/>
        <end position="592"/>
    </location>
</feature>
<feature type="region of interest" description="Disordered" evidence="6">
    <location>
        <begin position="994"/>
        <end position="1022"/>
    </location>
</feature>
<feature type="region of interest" description="Disordered" evidence="6">
    <location>
        <begin position="1056"/>
        <end position="1088"/>
    </location>
</feature>
<feature type="short sequence motif" description="PPxY motif">
    <location>
        <begin position="515"/>
        <end position="518"/>
    </location>
</feature>
<feature type="compositionally biased region" description="Polar residues" evidence="6">
    <location>
        <begin position="271"/>
        <end position="280"/>
    </location>
</feature>
<feature type="compositionally biased region" description="Polar residues" evidence="6">
    <location>
        <begin position="404"/>
        <end position="413"/>
    </location>
</feature>
<feature type="compositionally biased region" description="Pro residues" evidence="6">
    <location>
        <begin position="466"/>
        <end position="478"/>
    </location>
</feature>
<feature type="compositionally biased region" description="Basic and acidic residues" evidence="6">
    <location>
        <begin position="553"/>
        <end position="572"/>
    </location>
</feature>
<feature type="compositionally biased region" description="Basic and acidic residues" evidence="6">
    <location>
        <begin position="583"/>
        <end position="592"/>
    </location>
</feature>
<feature type="active site" description="Proton acceptor" evidence="1 2 5">
    <location>
        <position position="791"/>
    </location>
</feature>
<feature type="binding site" evidence="1 2">
    <location>
        <begin position="674"/>
        <end position="682"/>
    </location>
    <ligand>
        <name>ATP</name>
        <dbReference type="ChEBI" id="CHEBI:30616"/>
    </ligand>
</feature>
<feature type="binding site" evidence="2 8">
    <location>
        <position position="697"/>
    </location>
    <ligand>
        <name>ATP</name>
        <dbReference type="ChEBI" id="CHEBI:30616"/>
    </ligand>
</feature>
<feature type="modified residue" description="Phosphoserine; by AURKA" evidence="11">
    <location>
        <position position="83"/>
    </location>
</feature>
<feature type="modified residue" description="Phosphothreonine" evidence="28">
    <location>
        <position position="279"/>
    </location>
</feature>
<feature type="modified residue" description="Phosphoserine" evidence="29">
    <location>
        <position position="380"/>
    </location>
</feature>
<feature type="modified residue" description="Phosphoserine" evidence="29">
    <location>
        <position position="576"/>
    </location>
</feature>
<feature type="modified residue" description="Phosphothreonine" evidence="18">
    <location>
        <position position="1041"/>
    </location>
</feature>
<feature type="sequence variant" id="VAR_040669" description="In a lung adenocarcinoma sample; somatic mutation." evidence="14">
    <original>G</original>
    <variation>E</variation>
    <location>
        <position position="40"/>
    </location>
</feature>
<feature type="sequence variant" id="VAR_040670" description="In dbSNP:rs55842804." evidence="14">
    <original>S</original>
    <variation>L</variation>
    <location>
        <position position="91"/>
    </location>
</feature>
<feature type="sequence variant" id="VAR_019789" description="In dbSNP:rs558614." evidence="7">
    <original>A</original>
    <variation>V</variation>
    <location>
        <position position="324"/>
    </location>
</feature>
<feature type="sequence variant" id="VAR_047077" description="In dbSNP:rs2770928.">
    <original>G</original>
    <variation>S</variation>
    <location>
        <position position="363"/>
    </location>
</feature>
<feature type="sequence variant" id="VAR_040671" description="In dbSNP:rs35368391." evidence="14">
    <original>I</original>
    <variation>V</variation>
    <location>
        <position position="799"/>
    </location>
</feature>
<feature type="sequence variant" id="VAR_040672" description="In dbSNP:rs45523141." evidence="14">
    <original>A</original>
    <variation>G</variation>
    <location>
        <position position="1014"/>
    </location>
</feature>
<feature type="sequence variant" id="VAR_040673" description="In dbSNP:rs56116059." evidence="14">
    <original>L</original>
    <variation>P</variation>
    <location>
        <position position="1025"/>
    </location>
</feature>
<feature type="mutagenesis site" description="Fails to localize at the centromere during interphase." evidence="11">
    <original>S</original>
    <variation>C</variation>
    <location>
        <position position="83"/>
    </location>
</feature>
<feature type="mutagenesis site" description="Fails to localize at the centromere during interphase." evidence="11">
    <original>S</original>
    <variation>E</variation>
    <location>
        <position position="83"/>
    </location>
</feature>
<feature type="mutagenesis site" description="Loss of kinase activity, autophosphorylation and tumor suppressor activity." evidence="8 9">
    <original>K</original>
    <variation>A</variation>
    <location>
        <position position="697"/>
    </location>
</feature>
<feature type="mutagenesis site" description="Loss of tumor suppressor activity." evidence="9">
    <original>S</original>
    <variation>A</variation>
    <location>
        <position position="872"/>
    </location>
</feature>
<feature type="sequence conflict" description="In Ref. 5; BAA92381." evidence="25" ref="5">
    <original>RQQ</original>
    <variation>SSK</variation>
    <location>
        <begin position="59"/>
        <end position="61"/>
    </location>
</feature>
<feature type="sequence conflict" description="In Ref. 5; BAA92381." evidence="25" ref="5">
    <original>T</original>
    <variation>S</variation>
    <location>
        <position position="436"/>
    </location>
</feature>
<feature type="sequence conflict" description="In Ref. 1; AAF80561." evidence="25" ref="1">
    <original>A</original>
    <variation>V</variation>
    <location>
        <position position="711"/>
    </location>
</feature>
<feature type="sequence conflict" description="In Ref. 5; BAA92381." evidence="25" ref="5">
    <original>C</original>
    <variation>S</variation>
    <location>
        <position position="868"/>
    </location>
</feature>
<feature type="helix" evidence="30">
    <location>
        <begin position="74"/>
        <end position="84"/>
    </location>
</feature>
<feature type="helix" evidence="30">
    <location>
        <begin position="85"/>
        <end position="87"/>
    </location>
</feature>
<organism>
    <name type="scientific">Homo sapiens</name>
    <name type="common">Human</name>
    <dbReference type="NCBI Taxonomy" id="9606"/>
    <lineage>
        <taxon>Eukaryota</taxon>
        <taxon>Metazoa</taxon>
        <taxon>Chordata</taxon>
        <taxon>Craniata</taxon>
        <taxon>Vertebrata</taxon>
        <taxon>Euteleostomi</taxon>
        <taxon>Mammalia</taxon>
        <taxon>Eutheria</taxon>
        <taxon>Euarchontoglires</taxon>
        <taxon>Primates</taxon>
        <taxon>Haplorrhini</taxon>
        <taxon>Catarrhini</taxon>
        <taxon>Hominidae</taxon>
        <taxon>Homo</taxon>
    </lineage>
</organism>
<proteinExistence type="evidence at protein level"/>
<gene>
    <name evidence="27" type="primary">LATS2</name>
    <name type="synonym">KPM</name>
</gene>
<sequence>MRPKTFPATTYSGNSRQRLQEIREGLKQPSKSSVQGLPAGPNSDTSLDAKVLGSKDATRQQQQMRATPKFGPYQKALREIRYSLLPFANESGTSAAAEVNRQMLQELVNAGCDQEMAGRALKQTGSRSIEAALEYISKMGYLDPRNEQIVRVIKQTSPGKGLMPTPVTRRPSFEGTGDSFASYHQLSGTPYEGPSFGADGPTALEEMPRPYVDYLFPGVGPHGPGHQHQHPPKGYGASVEAAGAHFPLQGAHYGRPHLLVPGEPLGYGVQRSPSFQSKTPPETGGYASLPTKGQGGPPGAGLAFPPPAAGLYVPHPHHKQAGPAAHQLHVLGSRSQVFASDSPPQSLLTPSRNSLNVDLYELGSTSVQQWPAATLARRDSLQKPGLEAPPRAHVAFRPDCPVPSRTNSFNSHQPRPGPPGKAEPSLPAPNTVTAVTAAHILHPVKSVRVLRPEPQTAVGPSHPAWVPAPAPAPAPAPAPAAEGLDAKEEHALALGGAGAFPLDVEYGGPDRRCPPPPYPKHLLLRSKSEQYDLDSLCAGMEQSLRAGPNEPEGGDKSRKSAKGDKGGKDKKQIQTSPVPVRKNSRDEEKRESRIKSYSPYAFKFFMEQHVENVIKTYQQKVNRRLQLEQEMAKAGLCEAEQEQMRKILYQKESNYNRLKRAKMDKSMFVKIKTLGIGAFGEVCLACKVDTHALYAMKTLRKKDVLNRNQVAHVKAERDILAEADNEWVVKLYYSFQDKDSLYFVMDYIPGGDMMSLLIRMEVFPEHLARFYIAELTLAIESVHKMGFIHRDIKPDNILIDLDGHIKLTDFGLCTGFRWTHNSKYYQKGSHVRQDSMEPSDLWDDVSNCRCGDRLKTLEQRARKQHQRCLAHSLVGTPNYIAPEVLLRKGYTQLCDWWSVGVILFEMLVGQPPFLAPTPTETQLKVINWENTLHIPAQVKLSPEARDLITKLCCSADHRLGRNGADDLKAHPFFSAIDFSSDIRKQPAPYVPTISHPMDTSNFDPVDEESPWNDASEGSTKAWDTLTSPNNKHPEHAFYEFTFRRFFDDNGYPFRCPKPSGAEASQAESSDLESSDLVDQTEGCQPVYV</sequence>
<evidence type="ECO:0000250" key="1">
    <source>
        <dbReference type="UniProtKB" id="P22612"/>
    </source>
</evidence>
<evidence type="ECO:0000255" key="2">
    <source>
        <dbReference type="PROSITE-ProRule" id="PRU00159"/>
    </source>
</evidence>
<evidence type="ECO:0000255" key="3">
    <source>
        <dbReference type="PROSITE-ProRule" id="PRU00212"/>
    </source>
</evidence>
<evidence type="ECO:0000255" key="4">
    <source>
        <dbReference type="PROSITE-ProRule" id="PRU00618"/>
    </source>
</evidence>
<evidence type="ECO:0000255" key="5">
    <source>
        <dbReference type="PROSITE-ProRule" id="PRU10027"/>
    </source>
</evidence>
<evidence type="ECO:0000256" key="6">
    <source>
        <dbReference type="SAM" id="MobiDB-lite"/>
    </source>
</evidence>
<evidence type="ECO:0000269" key="7">
    <source>
    </source>
</evidence>
<evidence type="ECO:0000269" key="8">
    <source>
    </source>
</evidence>
<evidence type="ECO:0000269" key="9">
    <source>
    </source>
</evidence>
<evidence type="ECO:0000269" key="10">
    <source>
    </source>
</evidence>
<evidence type="ECO:0000269" key="11">
    <source>
    </source>
</evidence>
<evidence type="ECO:0000269" key="12">
    <source>
    </source>
</evidence>
<evidence type="ECO:0000269" key="13">
    <source>
    </source>
</evidence>
<evidence type="ECO:0000269" key="14">
    <source>
    </source>
</evidence>
<evidence type="ECO:0000269" key="15">
    <source>
    </source>
</evidence>
<evidence type="ECO:0000269" key="16">
    <source>
    </source>
</evidence>
<evidence type="ECO:0000269" key="17">
    <source>
    </source>
</evidence>
<evidence type="ECO:0000269" key="18">
    <source>
    </source>
</evidence>
<evidence type="ECO:0000269" key="19">
    <source>
    </source>
</evidence>
<evidence type="ECO:0000269" key="20">
    <source>
    </source>
</evidence>
<evidence type="ECO:0000269" key="21">
    <source>
    </source>
</evidence>
<evidence type="ECO:0000269" key="22">
    <source>
    </source>
</evidence>
<evidence type="ECO:0000269" key="23">
    <source>
    </source>
</evidence>
<evidence type="ECO:0000269" key="24">
    <source>
    </source>
</evidence>
<evidence type="ECO:0000305" key="25"/>
<evidence type="ECO:0000312" key="26">
    <source>
        <dbReference type="EMBL" id="AAF80561.1"/>
    </source>
</evidence>
<evidence type="ECO:0000312" key="27">
    <source>
        <dbReference type="EMBL" id="BAA92381.1"/>
    </source>
</evidence>
<evidence type="ECO:0007744" key="28">
    <source>
    </source>
</evidence>
<evidence type="ECO:0007744" key="29">
    <source>
    </source>
</evidence>
<evidence type="ECO:0007829" key="30">
    <source>
        <dbReference type="PDB" id="4ZRI"/>
    </source>
</evidence>
<reference evidence="25 26" key="1">
    <citation type="journal article" date="2000" name="Oncogene">
        <title>Molecular cloning of a novel human protein kinase, kpm, that is homologous to warts/lats, a Drosophila tumor suppressor.</title>
        <authorList>
            <person name="Hori T."/>
            <person name="Takaori-Kondo A."/>
            <person name="Kamikubo Y."/>
            <person name="Uchiyama T."/>
        </authorList>
    </citation>
    <scope>NUCLEOTIDE SEQUENCE [MRNA]</scope>
    <scope>FUNCTION</scope>
    <scope>TISSUE SPECIFICITY</scope>
    <scope>AUTOPHOSPHORYLATION</scope>
    <scope>MUTAGENESIS OF LYS-697</scope>
    <source>
        <tissue evidence="26">Myeloid</tissue>
    </source>
</reference>
<reference key="2">
    <citation type="journal article" date="2004" name="Nat. Genet.">
        <title>Complete sequencing and characterization of 21,243 full-length human cDNAs.</title>
        <authorList>
            <person name="Ota T."/>
            <person name="Suzuki Y."/>
            <person name="Nishikawa T."/>
            <person name="Otsuki T."/>
            <person name="Sugiyama T."/>
            <person name="Irie R."/>
            <person name="Wakamatsu A."/>
            <person name="Hayashi K."/>
            <person name="Sato H."/>
            <person name="Nagai K."/>
            <person name="Kimura K."/>
            <person name="Makita H."/>
            <person name="Sekine M."/>
            <person name="Obayashi M."/>
            <person name="Nishi T."/>
            <person name="Shibahara T."/>
            <person name="Tanaka T."/>
            <person name="Ishii S."/>
            <person name="Yamamoto J."/>
            <person name="Saito K."/>
            <person name="Kawai Y."/>
            <person name="Isono Y."/>
            <person name="Nakamura Y."/>
            <person name="Nagahari K."/>
            <person name="Murakami K."/>
            <person name="Yasuda T."/>
            <person name="Iwayanagi T."/>
            <person name="Wagatsuma M."/>
            <person name="Shiratori A."/>
            <person name="Sudo H."/>
            <person name="Hosoiri T."/>
            <person name="Kaku Y."/>
            <person name="Kodaira H."/>
            <person name="Kondo H."/>
            <person name="Sugawara M."/>
            <person name="Takahashi M."/>
            <person name="Kanda K."/>
            <person name="Yokoi T."/>
            <person name="Furuya T."/>
            <person name="Kikkawa E."/>
            <person name="Omura Y."/>
            <person name="Abe K."/>
            <person name="Kamihara K."/>
            <person name="Katsuta N."/>
            <person name="Sato K."/>
            <person name="Tanikawa M."/>
            <person name="Yamazaki M."/>
            <person name="Ninomiya K."/>
            <person name="Ishibashi T."/>
            <person name="Yamashita H."/>
            <person name="Murakawa K."/>
            <person name="Fujimori K."/>
            <person name="Tanai H."/>
            <person name="Kimata M."/>
            <person name="Watanabe M."/>
            <person name="Hiraoka S."/>
            <person name="Chiba Y."/>
            <person name="Ishida S."/>
            <person name="Ono Y."/>
            <person name="Takiguchi S."/>
            <person name="Watanabe S."/>
            <person name="Yosida M."/>
            <person name="Hotuta T."/>
            <person name="Kusano J."/>
            <person name="Kanehori K."/>
            <person name="Takahashi-Fujii A."/>
            <person name="Hara H."/>
            <person name="Tanase T.-O."/>
            <person name="Nomura Y."/>
            <person name="Togiya S."/>
            <person name="Komai F."/>
            <person name="Hara R."/>
            <person name="Takeuchi K."/>
            <person name="Arita M."/>
            <person name="Imose N."/>
            <person name="Musashino K."/>
            <person name="Yuuki H."/>
            <person name="Oshima A."/>
            <person name="Sasaki N."/>
            <person name="Aotsuka S."/>
            <person name="Yoshikawa Y."/>
            <person name="Matsunawa H."/>
            <person name="Ichihara T."/>
            <person name="Shiohata N."/>
            <person name="Sano S."/>
            <person name="Moriya S."/>
            <person name="Momiyama H."/>
            <person name="Satoh N."/>
            <person name="Takami S."/>
            <person name="Terashima Y."/>
            <person name="Suzuki O."/>
            <person name="Nakagawa S."/>
            <person name="Senoh A."/>
            <person name="Mizoguchi H."/>
            <person name="Goto Y."/>
            <person name="Shimizu F."/>
            <person name="Wakebe H."/>
            <person name="Hishigaki H."/>
            <person name="Watanabe T."/>
            <person name="Sugiyama A."/>
            <person name="Takemoto M."/>
            <person name="Kawakami B."/>
            <person name="Yamazaki M."/>
            <person name="Watanabe K."/>
            <person name="Kumagai A."/>
            <person name="Itakura S."/>
            <person name="Fukuzumi Y."/>
            <person name="Fujimori Y."/>
            <person name="Komiyama M."/>
            <person name="Tashiro H."/>
            <person name="Tanigami A."/>
            <person name="Fujiwara T."/>
            <person name="Ono T."/>
            <person name="Yamada K."/>
            <person name="Fujii Y."/>
            <person name="Ozaki K."/>
            <person name="Hirao M."/>
            <person name="Ohmori Y."/>
            <person name="Kawabata A."/>
            <person name="Hikiji T."/>
            <person name="Kobatake N."/>
            <person name="Inagaki H."/>
            <person name="Ikema Y."/>
            <person name="Okamoto S."/>
            <person name="Okitani R."/>
            <person name="Kawakami T."/>
            <person name="Noguchi S."/>
            <person name="Itoh T."/>
            <person name="Shigeta K."/>
            <person name="Senba T."/>
            <person name="Matsumura K."/>
            <person name="Nakajima Y."/>
            <person name="Mizuno T."/>
            <person name="Morinaga M."/>
            <person name="Sasaki M."/>
            <person name="Togashi T."/>
            <person name="Oyama M."/>
            <person name="Hata H."/>
            <person name="Watanabe M."/>
            <person name="Komatsu T."/>
            <person name="Mizushima-Sugano J."/>
            <person name="Satoh T."/>
            <person name="Shirai Y."/>
            <person name="Takahashi Y."/>
            <person name="Nakagawa K."/>
            <person name="Okumura K."/>
            <person name="Nagase T."/>
            <person name="Nomura N."/>
            <person name="Kikuchi H."/>
            <person name="Masuho Y."/>
            <person name="Yamashita R."/>
            <person name="Nakai K."/>
            <person name="Yada T."/>
            <person name="Nakamura Y."/>
            <person name="Ohara O."/>
            <person name="Isogai T."/>
            <person name="Sugano S."/>
        </authorList>
    </citation>
    <scope>NUCLEOTIDE SEQUENCE [LARGE SCALE MRNA]</scope>
    <source>
        <tissue>Testis</tissue>
    </source>
</reference>
<reference key="3">
    <citation type="journal article" date="2004" name="Nature">
        <title>The DNA sequence and analysis of human chromosome 13.</title>
        <authorList>
            <person name="Dunham A."/>
            <person name="Matthews L.H."/>
            <person name="Burton J."/>
            <person name="Ashurst J.L."/>
            <person name="Howe K.L."/>
            <person name="Ashcroft K.J."/>
            <person name="Beare D.M."/>
            <person name="Burford D.C."/>
            <person name="Hunt S.E."/>
            <person name="Griffiths-Jones S."/>
            <person name="Jones M.C."/>
            <person name="Keenan S.J."/>
            <person name="Oliver K."/>
            <person name="Scott C.E."/>
            <person name="Ainscough R."/>
            <person name="Almeida J.P."/>
            <person name="Ambrose K.D."/>
            <person name="Andrews D.T."/>
            <person name="Ashwell R.I.S."/>
            <person name="Babbage A.K."/>
            <person name="Bagguley C.L."/>
            <person name="Bailey J."/>
            <person name="Bannerjee R."/>
            <person name="Barlow K.F."/>
            <person name="Bates K."/>
            <person name="Beasley H."/>
            <person name="Bird C.P."/>
            <person name="Bray-Allen S."/>
            <person name="Brown A.J."/>
            <person name="Brown J.Y."/>
            <person name="Burrill W."/>
            <person name="Carder C."/>
            <person name="Carter N.P."/>
            <person name="Chapman J.C."/>
            <person name="Clamp M.E."/>
            <person name="Clark S.Y."/>
            <person name="Clarke G."/>
            <person name="Clee C.M."/>
            <person name="Clegg S.C."/>
            <person name="Cobley V."/>
            <person name="Collins J.E."/>
            <person name="Corby N."/>
            <person name="Coville G.J."/>
            <person name="Deloukas P."/>
            <person name="Dhami P."/>
            <person name="Dunham I."/>
            <person name="Dunn M."/>
            <person name="Earthrowl M.E."/>
            <person name="Ellington A.G."/>
            <person name="Faulkner L."/>
            <person name="Frankish A.G."/>
            <person name="Frankland J."/>
            <person name="French L."/>
            <person name="Garner P."/>
            <person name="Garnett J."/>
            <person name="Gilbert J.G.R."/>
            <person name="Gilson C.J."/>
            <person name="Ghori J."/>
            <person name="Grafham D.V."/>
            <person name="Gribble S.M."/>
            <person name="Griffiths C."/>
            <person name="Hall R.E."/>
            <person name="Hammond S."/>
            <person name="Harley J.L."/>
            <person name="Hart E.A."/>
            <person name="Heath P.D."/>
            <person name="Howden P.J."/>
            <person name="Huckle E.J."/>
            <person name="Hunt P.J."/>
            <person name="Hunt A.R."/>
            <person name="Johnson C."/>
            <person name="Johnson D."/>
            <person name="Kay M."/>
            <person name="Kimberley A.M."/>
            <person name="King A."/>
            <person name="Laird G.K."/>
            <person name="Langford C.J."/>
            <person name="Lawlor S."/>
            <person name="Leongamornlert D.A."/>
            <person name="Lloyd D.M."/>
            <person name="Lloyd C."/>
            <person name="Loveland J.E."/>
            <person name="Lovell J."/>
            <person name="Martin S."/>
            <person name="Mashreghi-Mohammadi M."/>
            <person name="McLaren S.J."/>
            <person name="McMurray A."/>
            <person name="Milne S."/>
            <person name="Moore M.J.F."/>
            <person name="Nickerson T."/>
            <person name="Palmer S.A."/>
            <person name="Pearce A.V."/>
            <person name="Peck A.I."/>
            <person name="Pelan S."/>
            <person name="Phillimore B."/>
            <person name="Porter K.M."/>
            <person name="Rice C.M."/>
            <person name="Searle S."/>
            <person name="Sehra H.K."/>
            <person name="Shownkeen R."/>
            <person name="Skuce C.D."/>
            <person name="Smith M."/>
            <person name="Steward C.A."/>
            <person name="Sycamore N."/>
            <person name="Tester J."/>
            <person name="Thomas D.W."/>
            <person name="Tracey A."/>
            <person name="Tromans A."/>
            <person name="Tubby B."/>
            <person name="Wall M."/>
            <person name="Wallis J.M."/>
            <person name="West A.P."/>
            <person name="Whitehead S.L."/>
            <person name="Willey D.L."/>
            <person name="Wilming L."/>
            <person name="Wray P.W."/>
            <person name="Wright M.W."/>
            <person name="Young L."/>
            <person name="Coulson A."/>
            <person name="Durbin R.M."/>
            <person name="Hubbard T."/>
            <person name="Sulston J.E."/>
            <person name="Beck S."/>
            <person name="Bentley D.R."/>
            <person name="Rogers J."/>
            <person name="Ross M.T."/>
        </authorList>
    </citation>
    <scope>NUCLEOTIDE SEQUENCE [LARGE SCALE GENOMIC DNA]</scope>
</reference>
<reference key="4">
    <citation type="submission" date="2005-07" db="EMBL/GenBank/DDBJ databases">
        <authorList>
            <person name="Mural R.J."/>
            <person name="Istrail S."/>
            <person name="Sutton G.G."/>
            <person name="Florea L."/>
            <person name="Halpern A.L."/>
            <person name="Mobarry C.M."/>
            <person name="Lippert R."/>
            <person name="Walenz B."/>
            <person name="Shatkay H."/>
            <person name="Dew I."/>
            <person name="Miller J.R."/>
            <person name="Flanigan M.J."/>
            <person name="Edwards N.J."/>
            <person name="Bolanos R."/>
            <person name="Fasulo D."/>
            <person name="Halldorsson B.V."/>
            <person name="Hannenhalli S."/>
            <person name="Turner R."/>
            <person name="Yooseph S."/>
            <person name="Lu F."/>
            <person name="Nusskern D.R."/>
            <person name="Shue B.C."/>
            <person name="Zheng X.H."/>
            <person name="Zhong F."/>
            <person name="Delcher A.L."/>
            <person name="Huson D.H."/>
            <person name="Kravitz S.A."/>
            <person name="Mouchard L."/>
            <person name="Reinert K."/>
            <person name="Remington K.A."/>
            <person name="Clark A.G."/>
            <person name="Waterman M.S."/>
            <person name="Eichler E.E."/>
            <person name="Adams M.D."/>
            <person name="Hunkapiller M.W."/>
            <person name="Myers E.W."/>
            <person name="Venter J.C."/>
        </authorList>
    </citation>
    <scope>NUCLEOTIDE SEQUENCE [LARGE SCALE GENOMIC DNA]</scope>
</reference>
<reference evidence="25 27" key="5">
    <citation type="journal article" date="2000" name="Genomics">
        <title>Structure, expression, and chromosome mapping of LATS2, a mammalian homologue of the Drosophila tumor suppressor gene lats/warts.</title>
        <authorList>
            <person name="Yabuta N."/>
            <person name="Fujii T."/>
            <person name="Copeland N.G."/>
            <person name="Gilbert D.J."/>
            <person name="Jenkins N.A."/>
            <person name="Nishiguchi H."/>
            <person name="Endo Y."/>
            <person name="Toji S."/>
            <person name="Tanaka H."/>
            <person name="Nishimune Y."/>
            <person name="Nojima H."/>
        </authorList>
    </citation>
    <scope>NUCLEOTIDE SEQUENCE [MRNA] OF 42-1088</scope>
    <scope>TISSUE SPECIFICITY</scope>
    <scope>VARIANT VAL-324</scope>
    <source>
        <tissue evidence="7">Testis</tissue>
    </source>
</reference>
<reference evidence="25" key="6">
    <citation type="journal article" date="2003" name="Oncogene">
        <title>Lats2, a putative tumor suppressor, inhibits G1/S transition.</title>
        <authorList>
            <person name="Li Y."/>
            <person name="Pei J."/>
            <person name="Xia H."/>
            <person name="Ke H."/>
            <person name="Wang H."/>
            <person name="Tao W."/>
        </authorList>
    </citation>
    <scope>FUNCTION</scope>
    <scope>SUBCELLULAR LOCATION</scope>
    <scope>MUTAGENESIS OF LYS-697 AND SER-872</scope>
</reference>
<reference evidence="25" key="7">
    <citation type="journal article" date="2004" name="Genes Cells">
        <title>The centrosomal protein Lats2 is a phosphorylation target of Aurora-A kinase.</title>
        <authorList>
            <person name="Toji S."/>
            <person name="Yabuta N."/>
            <person name="Hosomi T."/>
            <person name="Nishihara S."/>
            <person name="Kobayashi T."/>
            <person name="Suzuki S."/>
            <person name="Tamai K."/>
            <person name="Nojima H."/>
        </authorList>
    </citation>
    <scope>SUBCELLULAR LOCATION</scope>
    <scope>INTERACTION WITH AURKA</scope>
    <scope>MUTAGENESIS OF SER-83</scope>
    <scope>PHOSPHORYLATION AT SER-83</scope>
</reference>
<reference evidence="25" key="8">
    <citation type="journal article" date="2004" name="Mol. Endocrinol.">
        <title>The LATS2/KPM tumor suppressor is a negative regulator of the androgen receptor.</title>
        <authorList>
            <person name="Powzaniuk M."/>
            <person name="McElwee-Witmer S."/>
            <person name="Vogel R.L."/>
            <person name="Hayami T."/>
            <person name="Rutledge S.J."/>
            <person name="Chen F."/>
            <person name="Harada S."/>
            <person name="Schmidt A."/>
            <person name="Rodan G.A."/>
            <person name="Freedman L.P."/>
            <person name="Bai C."/>
        </authorList>
    </citation>
    <scope>FUNCTION</scope>
    <scope>INTERACTION WITH AR</scope>
</reference>
<reference key="9">
    <citation type="journal article" date="2005" name="Oncogene">
        <title>The Ste20-like kinase Mst2 activates the human large tumor suppressor kinase Lats1.</title>
        <authorList>
            <person name="Chan E.H.Y."/>
            <person name="Nousiainen M."/>
            <person name="Chalamalasetty R.B."/>
            <person name="Schaefer A."/>
            <person name="Nigg E.A."/>
            <person name="Sillje H.H.W."/>
        </authorList>
    </citation>
    <scope>PHOSPHORYLATION</scope>
</reference>
<reference key="10">
    <citation type="journal article" date="2006" name="FEBS Lett.">
        <title>LATS2-Ajuba complex regulates gamma-tubulin recruitment to centrosomes and spindle organization during mitosis.</title>
        <authorList>
            <person name="Abe Y."/>
            <person name="Ohsugi M."/>
            <person name="Haraguchi K."/>
            <person name="Fujimoto J."/>
            <person name="Yamamoto T."/>
        </authorList>
    </citation>
    <scope>INTERACTION WITH AJUBA</scope>
</reference>
<reference key="11">
    <citation type="journal article" date="2008" name="J. Biol. Chem.">
        <title>Tumor suppressor LATS1 is a negative regulator of oncogene YAP.</title>
        <authorList>
            <person name="Hao Y."/>
            <person name="Chun A."/>
            <person name="Cheung K."/>
            <person name="Rashidi B."/>
            <person name="Yang X."/>
        </authorList>
    </citation>
    <scope>FUNCTION</scope>
    <scope>INTERACTION WITH YAP1</scope>
</reference>
<reference key="12">
    <citation type="journal article" date="2008" name="Proc. Natl. Acad. Sci. U.S.A.">
        <title>A quantitative atlas of mitotic phosphorylation.</title>
        <authorList>
            <person name="Dephoure N."/>
            <person name="Zhou C."/>
            <person name="Villen J."/>
            <person name="Beausoleil S.A."/>
            <person name="Bakalarski C.E."/>
            <person name="Elledge S.J."/>
            <person name="Gygi S.P."/>
        </authorList>
    </citation>
    <scope>PHOSPHORYLATION [LARGE SCALE ANALYSIS] AT THR-279</scope>
    <scope>IDENTIFICATION BY MASS SPECTROMETRY [LARGE SCALE ANALYSIS]</scope>
    <source>
        <tissue>Cervix carcinoma</tissue>
    </source>
</reference>
<reference key="13">
    <citation type="journal article" date="2010" name="Curr. Biol.">
        <title>Ajuba LIM proteins are negative regulators of the Hippo signaling pathway.</title>
        <authorList>
            <person name="Das Thakur M."/>
            <person name="Feng Y."/>
            <person name="Jagannathan R."/>
            <person name="Seppa M.J."/>
            <person name="Skeath J.B."/>
            <person name="Longmore G.D."/>
        </authorList>
    </citation>
    <scope>INTERACTION WITH LIMD1; WTIP AND AJUBA</scope>
</reference>
<reference key="14">
    <citation type="journal article" date="2010" name="Int. J. Cancer">
        <title>Molecular characterization of human homologs of yeast MOB1.</title>
        <authorList>
            <person name="Chow A."/>
            <person name="Hao Y."/>
            <person name="Yang X."/>
        </authorList>
    </citation>
    <scope>INTERACTION WITH MOB1A AND MOB1B</scope>
</reference>
<reference key="15">
    <citation type="journal article" date="2012" name="EMBO J.">
        <title>Lats2 kinase potentiates Snail1 activity by promoting nuclear retention upon phosphorylation.</title>
        <authorList>
            <person name="Zhang K."/>
            <person name="Rodriguez-Aznar E."/>
            <person name="Yabuta N."/>
            <person name="Owen R.J."/>
            <person name="Mingot J.M."/>
            <person name="Nojima H."/>
            <person name="Nieto M.A."/>
            <person name="Longmore G.D."/>
        </authorList>
    </citation>
    <scope>FUNCTION</scope>
    <scope>SUBCELLULAR LOCATION</scope>
    <scope>INTERACTION WITH SNAI1</scope>
    <scope>PHOSPHORYLATION AT THR-1041</scope>
</reference>
<reference key="16">
    <citation type="journal article" date="2013" name="J. Proteome Res.">
        <title>Toward a comprehensive characterization of a human cancer cell phosphoproteome.</title>
        <authorList>
            <person name="Zhou H."/>
            <person name="Di Palma S."/>
            <person name="Preisinger C."/>
            <person name="Peng M."/>
            <person name="Polat A.N."/>
            <person name="Heck A.J."/>
            <person name="Mohammed S."/>
        </authorList>
    </citation>
    <scope>PHOSPHORYLATION [LARGE SCALE ANALYSIS] AT SER-380 AND SER-576</scope>
    <scope>IDENTIFICATION BY MASS SPECTROMETRY [LARGE SCALE ANALYSIS]</scope>
    <source>
        <tissue>Cervix carcinoma</tissue>
        <tissue>Erythroleukemia</tissue>
    </source>
</reference>
<reference key="17">
    <citation type="journal article" date="2014" name="J. Proteomics">
        <title>An enzyme assisted RP-RPLC approach for in-depth analysis of human liver phosphoproteome.</title>
        <authorList>
            <person name="Bian Y."/>
            <person name="Song C."/>
            <person name="Cheng K."/>
            <person name="Dong M."/>
            <person name="Wang F."/>
            <person name="Huang J."/>
            <person name="Sun D."/>
            <person name="Wang L."/>
            <person name="Ye M."/>
            <person name="Zou H."/>
        </authorList>
    </citation>
    <scope>IDENTIFICATION BY MASS SPECTROMETRY [LARGE SCALE ANALYSIS]</scope>
    <source>
        <tissue>Liver</tissue>
    </source>
</reference>
<reference key="18">
    <citation type="journal article" date="2014" name="Mol. Biol. Evol.">
        <title>Evolutionary and Molecular Facts Link the WWC Protein Family to Hippo Signaling.</title>
        <authorList>
            <person name="Wennmann D.O."/>
            <person name="Schmitz J."/>
            <person name="Wehr M.C."/>
            <person name="Krahn M.P."/>
            <person name="Koschmal N."/>
            <person name="Gromnitza S."/>
            <person name="Schulze U."/>
            <person name="Weide T."/>
            <person name="Chekuri A."/>
            <person name="Skryabin B.V."/>
            <person name="Gerke V."/>
            <person name="Pavenstadt H."/>
            <person name="Duning K."/>
            <person name="Kremerskothen J."/>
        </authorList>
    </citation>
    <scope>INTERACTION WITH WWC1; WWC2 AND WWC3</scope>
</reference>
<reference key="19">
    <citation type="journal article" date="2015" name="Nat. Commun.">
        <title>MAP4K family kinases act in parallel to MST1/2 to activate LATS1/2 in the Hippo pathway.</title>
        <authorList>
            <person name="Meng Z."/>
            <person name="Moroishi T."/>
            <person name="Mottier-Pavie V."/>
            <person name="Plouffe S.W."/>
            <person name="Hansen C.G."/>
            <person name="Hong A.W."/>
            <person name="Park H.W."/>
            <person name="Mo J.S."/>
            <person name="Lu W."/>
            <person name="Lu S."/>
            <person name="Flores F."/>
            <person name="Yu F.X."/>
            <person name="Halder G."/>
            <person name="Guan K.L."/>
        </authorList>
    </citation>
    <scope>FUNCTION</scope>
    <scope>PHOSPHORYLATION BY MAP4K</scope>
</reference>
<reference key="20">
    <citation type="journal article" date="2016" name="EMBO Rep.">
        <title>Role of Angiomotin-like 2 mono-ubiquitination on YAP inhibition.</title>
        <authorList>
            <person name="Kim M."/>
            <person name="Kim M."/>
            <person name="Park S.J."/>
            <person name="Lee C."/>
            <person name="Lim D.S."/>
        </authorList>
    </citation>
    <scope>FUNCTION</scope>
    <scope>INTERACTION WITH AMOTL2</scope>
</reference>
<reference key="21">
    <citation type="journal article" date="2020" name="J. Exp. Med.">
        <title>A loss-of-function NUAK2 mutation in humans causes anencephaly due to impaired Hippo-YAP signaling.</title>
        <authorList>
            <person name="Bonnard C."/>
            <person name="Navaratnam N."/>
            <person name="Ghosh K."/>
            <person name="Chan P.W."/>
            <person name="Tan T.T."/>
            <person name="Pomp O."/>
            <person name="Ng A.Y.J."/>
            <person name="Tohari S."/>
            <person name="Changede R."/>
            <person name="Carling D."/>
            <person name="Venkatesh B."/>
            <person name="Altunoglu U."/>
            <person name="Kayserili H."/>
            <person name="Reversade B."/>
        </authorList>
    </citation>
    <scope>PHOSPHORYLATION BY NUAK2</scope>
</reference>
<reference key="22">
    <citation type="journal article" date="2021" name="Life. Sci Alliance">
        <title>AMOTL2 mono-ubiquitination by WWP1 promotes contact inhibition by facilitating LATS activation.</title>
        <authorList>
            <person name="Hwang D."/>
            <person name="Kim M."/>
            <person name="Kim S."/>
            <person name="Kwon M.R."/>
            <person name="Kang Y.S."/>
            <person name="Kim D."/>
            <person name="Kang H.C."/>
            <person name="Lim D.S."/>
        </authorList>
    </citation>
    <scope>FUNCTION</scope>
</reference>
<reference key="23">
    <citation type="journal article" date="2024" name="Mol. Cell">
        <title>Consecutive palmitoylation and phosphorylation orchestrates NLRP3 membrane trafficking and inflammasome activation.</title>
        <authorList>
            <person name="Nie L."/>
            <person name="Fei C."/>
            <person name="Fan Y."/>
            <person name="Dang F."/>
            <person name="Zhao Z."/>
            <person name="Zhu T."/>
            <person name="Wu X."/>
            <person name="Dai T."/>
            <person name="Balasubramanian A."/>
            <person name="Pan J."/>
            <person name="Hu Y."/>
            <person name="Luo H.R."/>
            <person name="Wei W."/>
            <person name="Chen J."/>
        </authorList>
    </citation>
    <scope>FUNCTION</scope>
    <scope>CATALYTIC ACTIVITY</scope>
</reference>
<reference key="24">
    <citation type="journal article" date="2007" name="Nature">
        <title>Patterns of somatic mutation in human cancer genomes.</title>
        <authorList>
            <person name="Greenman C."/>
            <person name="Stephens P."/>
            <person name="Smith R."/>
            <person name="Dalgliesh G.L."/>
            <person name="Hunter C."/>
            <person name="Bignell G."/>
            <person name="Davies H."/>
            <person name="Teague J."/>
            <person name="Butler A."/>
            <person name="Stevens C."/>
            <person name="Edkins S."/>
            <person name="O'Meara S."/>
            <person name="Vastrik I."/>
            <person name="Schmidt E.E."/>
            <person name="Avis T."/>
            <person name="Barthorpe S."/>
            <person name="Bhamra G."/>
            <person name="Buck G."/>
            <person name="Choudhury B."/>
            <person name="Clements J."/>
            <person name="Cole J."/>
            <person name="Dicks E."/>
            <person name="Forbes S."/>
            <person name="Gray K."/>
            <person name="Halliday K."/>
            <person name="Harrison R."/>
            <person name="Hills K."/>
            <person name="Hinton J."/>
            <person name="Jenkinson A."/>
            <person name="Jones D."/>
            <person name="Menzies A."/>
            <person name="Mironenko T."/>
            <person name="Perry J."/>
            <person name="Raine K."/>
            <person name="Richardson D."/>
            <person name="Shepherd R."/>
            <person name="Small A."/>
            <person name="Tofts C."/>
            <person name="Varian J."/>
            <person name="Webb T."/>
            <person name="West S."/>
            <person name="Widaa S."/>
            <person name="Yates A."/>
            <person name="Cahill D.P."/>
            <person name="Louis D.N."/>
            <person name="Goldstraw P."/>
            <person name="Nicholson A.G."/>
            <person name="Brasseur F."/>
            <person name="Looijenga L."/>
            <person name="Weber B.L."/>
            <person name="Chiew Y.-E."/>
            <person name="DeFazio A."/>
            <person name="Greaves M.F."/>
            <person name="Green A.R."/>
            <person name="Campbell P."/>
            <person name="Birney E."/>
            <person name="Easton D.F."/>
            <person name="Chenevix-Trench G."/>
            <person name="Tan M.-H."/>
            <person name="Khoo S.K."/>
            <person name="Teh B.T."/>
            <person name="Yuen S.T."/>
            <person name="Leung S.Y."/>
            <person name="Wooster R."/>
            <person name="Futreal P.A."/>
            <person name="Stratton M.R."/>
        </authorList>
    </citation>
    <scope>VARIANTS [LARGE SCALE ANALYSIS] GLU-40; LEU-91; VAL-799; GLY-1014 AND PRO-1025</scope>
</reference>
<keyword id="KW-0002">3D-structure</keyword>
<keyword id="KW-0067">ATP-binding</keyword>
<keyword id="KW-0131">Cell cycle</keyword>
<keyword id="KW-0132">Cell division</keyword>
<keyword id="KW-0963">Cytoplasm</keyword>
<keyword id="KW-0206">Cytoskeleton</keyword>
<keyword id="KW-0418">Kinase</keyword>
<keyword id="KW-0460">Magnesium</keyword>
<keyword id="KW-0479">Metal-binding</keyword>
<keyword id="KW-0498">Mitosis</keyword>
<keyword id="KW-0547">Nucleotide-binding</keyword>
<keyword id="KW-0539">Nucleus</keyword>
<keyword id="KW-0597">Phosphoprotein</keyword>
<keyword id="KW-1267">Proteomics identification</keyword>
<keyword id="KW-1185">Reference proteome</keyword>
<keyword id="KW-0723">Serine/threonine-protein kinase</keyword>
<keyword id="KW-0808">Transferase</keyword>
<keyword id="KW-0043">Tumor suppressor</keyword>